<sequence length="467" mass="52758">MLKSAVYSILAASLVNAGTIPLGKLSDIDKIGTQTEIFPFLGGSGPYYSFPGDYGISRDLPESCEMKQVQMVGRHGERYPTVSKAKSIMTTWYKLSNYTGQFSGALSFLNDDYEFFIRDTKNLEMETTLANSVNVLNPYTGEMNAKRHARDFLAQYGYMVENQTSFAVFTSNSNRCHDTAQYFIDGLGDKFNISLQTISEAESAGANTLSAHHSCPAWDDDVNDDILKKYDTKYLSGIAKRLNKENKGLNLTSSDANTFFAWCAYEINARGYSDICNIFTKDELVRFSYGQDLETYYQTGPGYDVVRSVGANLFNASVKLLKESEVQDQKVWLSFTHDTDILNYLTTIGIIDDKNNLTAEHVPFMENTFHRSWYVPQGARVYTEKFQCSNDTYVRYVINDAVVPIETCSTGPGFSCEINDFYDYAEKRVAGTDFLKVCNVSSVSNSTELTFFWDWNTKHYNDTLLKQ</sequence>
<evidence type="ECO:0000250" key="1"/>
<evidence type="ECO:0000255" key="2"/>
<evidence type="ECO:0000269" key="3">
    <source>
    </source>
</evidence>
<evidence type="ECO:0000305" key="4"/>
<comment type="catalytic activity">
    <reaction>
        <text>a phosphate monoester + H2O = an alcohol + phosphate</text>
        <dbReference type="Rhea" id="RHEA:15017"/>
        <dbReference type="ChEBI" id="CHEBI:15377"/>
        <dbReference type="ChEBI" id="CHEBI:30879"/>
        <dbReference type="ChEBI" id="CHEBI:43474"/>
        <dbReference type="ChEBI" id="CHEBI:67140"/>
        <dbReference type="EC" id="3.1.3.2"/>
    </reaction>
</comment>
<comment type="induction">
    <text>S.cerevisiae has 2 types of acid phosphatase: one is constitutive and the other is repressible by inorganic phosphate.</text>
</comment>
<comment type="PTM">
    <text>Glycosylated during secretion across the membrane.</text>
</comment>
<comment type="miscellaneous">
    <text evidence="3">Present with 1460 molecules/cell in log phase SD medium.</text>
</comment>
<comment type="similarity">
    <text evidence="4">Belongs to the histidine acid phosphatase family.</text>
</comment>
<feature type="signal peptide" evidence="1">
    <location>
        <begin position="1"/>
        <end position="17"/>
    </location>
</feature>
<feature type="chain" id="PRO_0000023956" description="Acid phosphatase PHO11">
    <location>
        <begin position="18"/>
        <end position="467"/>
    </location>
</feature>
<feature type="active site" description="Nucleophile" evidence="1">
    <location>
        <position position="75"/>
    </location>
</feature>
<feature type="active site" description="Proton donor" evidence="1">
    <location>
        <position position="338"/>
    </location>
</feature>
<feature type="glycosylation site" description="N-linked (GlcNAc...) asparagine" evidence="2">
    <location>
        <position position="97"/>
    </location>
</feature>
<feature type="glycosylation site" description="N-linked (GlcNAc...) asparagine" evidence="2">
    <location>
        <position position="162"/>
    </location>
</feature>
<feature type="glycosylation site" description="N-linked (GlcNAc...) asparagine" evidence="2">
    <location>
        <position position="192"/>
    </location>
</feature>
<feature type="glycosylation site" description="N-linked (GlcNAc...) asparagine" evidence="2">
    <location>
        <position position="250"/>
    </location>
</feature>
<feature type="glycosylation site" description="N-linked (GlcNAc...) asparagine" evidence="2">
    <location>
        <position position="315"/>
    </location>
</feature>
<feature type="glycosylation site" description="N-linked (GlcNAc...) asparagine" evidence="2">
    <location>
        <position position="356"/>
    </location>
</feature>
<feature type="glycosylation site" description="N-linked (GlcNAc...) asparagine" evidence="2">
    <location>
        <position position="390"/>
    </location>
</feature>
<feature type="glycosylation site" description="N-linked (GlcNAc...) asparagine" evidence="2">
    <location>
        <position position="439"/>
    </location>
</feature>
<feature type="glycosylation site" description="N-linked (GlcNAc...) asparagine" evidence="2">
    <location>
        <position position="445"/>
    </location>
</feature>
<feature type="glycosylation site" description="N-linked (GlcNAc...) asparagine" evidence="2">
    <location>
        <position position="461"/>
    </location>
</feature>
<feature type="sequence conflict" description="In Ref. 1; AAA73479." evidence="4" ref="1">
    <original>A</original>
    <variation>L</variation>
    <location>
        <position position="17"/>
    </location>
</feature>
<feature type="sequence conflict" description="In Ref. 1; AAA73479." evidence="4" ref="1">
    <original>VS</original>
    <variation>AR</variation>
    <location>
        <begin position="82"/>
        <end position="83"/>
    </location>
</feature>
<feature type="sequence conflict" description="In Ref. 1; AAA73479." evidence="4" ref="1">
    <original>R</original>
    <variation>H</variation>
    <location>
        <position position="150"/>
    </location>
</feature>
<feature type="sequence conflict" description="In Ref. 1; AAA73479." evidence="4" ref="1">
    <original>K</original>
    <variation>Q</variation>
    <location>
        <position position="354"/>
    </location>
</feature>
<feature type="sequence conflict" description="In Ref. 1; AAA73479." evidence="4" ref="1">
    <original>D</original>
    <variation>G</variation>
    <location>
        <position position="423"/>
    </location>
</feature>
<accession>P35842</accession>
<accession>D6VPP1</accession>
<protein>
    <recommendedName>
        <fullName>Acid phosphatase PHO11</fullName>
        <ecNumber>3.1.3.2</ecNumber>
    </recommendedName>
    <alternativeName>
        <fullName>P56</fullName>
    </alternativeName>
</protein>
<keyword id="KW-0325">Glycoprotein</keyword>
<keyword id="KW-0378">Hydrolase</keyword>
<keyword id="KW-1185">Reference proteome</keyword>
<keyword id="KW-0732">Signal</keyword>
<reference key="1">
    <citation type="journal article" date="1989" name="Sheng Wu Hua Xue Yu Sheng Wu Wu Li Xue Bao">
        <title>The primary structure of acid phosphatase gene PHO11 in S. cerevisiae and comparison with other gene families.</title>
        <authorList>
            <person name="Chen J.Y."/>
            <person name="Gong Y.I."/>
            <person name="Ao S.Z."/>
        </authorList>
    </citation>
    <scope>NUCLEOTIDE SEQUENCE [GENOMIC DNA]</scope>
</reference>
<reference key="2">
    <citation type="submission" date="1994-02" db="EMBL/GenBank/DDBJ databases">
        <title>Sequencing of chromosome I of Saccharomyces cerevisiae: analysis of the 52 Kbp CDC15-FLO1-PHO11-YAR074 region.</title>
        <authorList>
            <person name="Bussey H."/>
            <person name="Keng T."/>
            <person name="Storms R.K."/>
            <person name="Vo D."/>
            <person name="Zhong W."/>
            <person name="Fortin N."/>
            <person name="Barton A.B."/>
            <person name="Kaback D.B."/>
            <person name="Clark M.W."/>
        </authorList>
    </citation>
    <scope>NUCLEOTIDE SEQUENCE [GENOMIC DNA]</scope>
    <source>
        <strain>ATCC 204511 / S288c / AB972</strain>
    </source>
</reference>
<reference key="3">
    <citation type="journal article" date="1995" name="Proc. Natl. Acad. Sci. U.S.A.">
        <title>The nucleotide sequence of chromosome I from Saccharomyces cerevisiae.</title>
        <authorList>
            <person name="Bussey H."/>
            <person name="Kaback D.B."/>
            <person name="Zhong W.-W."/>
            <person name="Vo D.H."/>
            <person name="Clark M.W."/>
            <person name="Fortin N."/>
            <person name="Hall J."/>
            <person name="Ouellette B.F.F."/>
            <person name="Keng T."/>
            <person name="Barton A.B."/>
            <person name="Su Y."/>
            <person name="Davies C.J."/>
            <person name="Storms R.K."/>
        </authorList>
    </citation>
    <scope>NUCLEOTIDE SEQUENCE [LARGE SCALE GENOMIC DNA]</scope>
    <source>
        <strain>ATCC 204508 / S288c</strain>
    </source>
</reference>
<reference key="4">
    <citation type="journal article" date="2014" name="G3 (Bethesda)">
        <title>The reference genome sequence of Saccharomyces cerevisiae: Then and now.</title>
        <authorList>
            <person name="Engel S.R."/>
            <person name="Dietrich F.S."/>
            <person name="Fisk D.G."/>
            <person name="Binkley G."/>
            <person name="Balakrishnan R."/>
            <person name="Costanzo M.C."/>
            <person name="Dwight S.S."/>
            <person name="Hitz B.C."/>
            <person name="Karra K."/>
            <person name="Nash R.S."/>
            <person name="Weng S."/>
            <person name="Wong E.D."/>
            <person name="Lloyd P."/>
            <person name="Skrzypek M.S."/>
            <person name="Miyasato S.R."/>
            <person name="Simison M."/>
            <person name="Cherry J.M."/>
        </authorList>
    </citation>
    <scope>GENOME REANNOTATION</scope>
    <source>
        <strain>ATCC 204508 / S288c</strain>
    </source>
</reference>
<reference key="5">
    <citation type="journal article" date="2003" name="Nature">
        <title>Global analysis of protein expression in yeast.</title>
        <authorList>
            <person name="Ghaemmaghami S."/>
            <person name="Huh W.-K."/>
            <person name="Bower K."/>
            <person name="Howson R.W."/>
            <person name="Belle A."/>
            <person name="Dephoure N."/>
            <person name="O'Shea E.K."/>
            <person name="Weissman J.S."/>
        </authorList>
    </citation>
    <scope>LEVEL OF PROTEIN EXPRESSION [LARGE SCALE ANALYSIS]</scope>
</reference>
<gene>
    <name type="primary">PHO11</name>
    <name type="ordered locus">YAR071W</name>
</gene>
<organism>
    <name type="scientific">Saccharomyces cerevisiae (strain ATCC 204508 / S288c)</name>
    <name type="common">Baker's yeast</name>
    <dbReference type="NCBI Taxonomy" id="559292"/>
    <lineage>
        <taxon>Eukaryota</taxon>
        <taxon>Fungi</taxon>
        <taxon>Dikarya</taxon>
        <taxon>Ascomycota</taxon>
        <taxon>Saccharomycotina</taxon>
        <taxon>Saccharomycetes</taxon>
        <taxon>Saccharomycetales</taxon>
        <taxon>Saccharomycetaceae</taxon>
        <taxon>Saccharomyces</taxon>
    </lineage>
</organism>
<proteinExistence type="evidence at protein level"/>
<dbReference type="EC" id="3.1.3.2"/>
<dbReference type="EMBL" id="U19789">
    <property type="protein sequence ID" value="AAA73479.1"/>
    <property type="molecule type" value="Genomic_DNA"/>
</dbReference>
<dbReference type="EMBL" id="L28920">
    <property type="protein sequence ID" value="AAC09508.1"/>
    <property type="molecule type" value="Genomic_DNA"/>
</dbReference>
<dbReference type="EMBL" id="BK006935">
    <property type="protein sequence ID" value="DAA07011.1"/>
    <property type="molecule type" value="Genomic_DNA"/>
</dbReference>
<dbReference type="PIR" id="S53476">
    <property type="entry name" value="S53476"/>
</dbReference>
<dbReference type="RefSeq" id="NP_009434.1">
    <property type="nucleotide sequence ID" value="NM_001178239.1"/>
</dbReference>
<dbReference type="SMR" id="P35842"/>
<dbReference type="BioGRID" id="31819">
    <property type="interactions" value="123"/>
</dbReference>
<dbReference type="DIP" id="DIP-4589N"/>
<dbReference type="FunCoup" id="P35842">
    <property type="interactions" value="558"/>
</dbReference>
<dbReference type="IntAct" id="P35842">
    <property type="interactions" value="3"/>
</dbReference>
<dbReference type="MINT" id="P35842"/>
<dbReference type="STRING" id="4932.YAR071W"/>
<dbReference type="GlyCosmos" id="P35842">
    <property type="glycosylation" value="10 sites, No reported glycans"/>
</dbReference>
<dbReference type="GlyGen" id="P35842">
    <property type="glycosylation" value="10 sites"/>
</dbReference>
<dbReference type="iPTMnet" id="P35842"/>
<dbReference type="PaxDb" id="4932-YAR071W"/>
<dbReference type="PeptideAtlas" id="P35842"/>
<dbReference type="EnsemblFungi" id="YAR071W_mRNA">
    <property type="protein sequence ID" value="YAR071W"/>
    <property type="gene ID" value="YAR071W"/>
</dbReference>
<dbReference type="GeneID" id="851299"/>
<dbReference type="KEGG" id="sce:YAR071W"/>
<dbReference type="AGR" id="SGD:S000000094"/>
<dbReference type="SGD" id="S000000094">
    <property type="gene designation" value="PHO11"/>
</dbReference>
<dbReference type="VEuPathDB" id="FungiDB:YAR071W"/>
<dbReference type="eggNOG" id="KOG1382">
    <property type="taxonomic scope" value="Eukaryota"/>
</dbReference>
<dbReference type="GeneTree" id="ENSGT00390000018409"/>
<dbReference type="HOGENOM" id="CLU_020880_3_1_1"/>
<dbReference type="InParanoid" id="P35842"/>
<dbReference type="OrthoDB" id="6509975at2759"/>
<dbReference type="BioCyc" id="YEAST:YAR071W-MONOMER"/>
<dbReference type="PRO" id="PR:P35842"/>
<dbReference type="Proteomes" id="UP000002311">
    <property type="component" value="Chromosome I"/>
</dbReference>
<dbReference type="RNAct" id="P35842">
    <property type="molecule type" value="protein"/>
</dbReference>
<dbReference type="GO" id="GO:0071944">
    <property type="term" value="C:cell periphery"/>
    <property type="evidence" value="ECO:0007005"/>
    <property type="project" value="SGD"/>
</dbReference>
<dbReference type="GO" id="GO:0005576">
    <property type="term" value="C:extracellular region"/>
    <property type="evidence" value="ECO:0000314"/>
    <property type="project" value="SGD"/>
</dbReference>
<dbReference type="GO" id="GO:0009277">
    <property type="term" value="C:fungal-type cell wall"/>
    <property type="evidence" value="ECO:0000318"/>
    <property type="project" value="GO_Central"/>
</dbReference>
<dbReference type="GO" id="GO:0003993">
    <property type="term" value="F:acid phosphatase activity"/>
    <property type="evidence" value="ECO:0000314"/>
    <property type="project" value="SGD"/>
</dbReference>
<dbReference type="GO" id="GO:0006796">
    <property type="term" value="P:phosphate-containing compound metabolic process"/>
    <property type="evidence" value="ECO:0000304"/>
    <property type="project" value="SGD"/>
</dbReference>
<dbReference type="CDD" id="cd07061">
    <property type="entry name" value="HP_HAP_like"/>
    <property type="match status" value="1"/>
</dbReference>
<dbReference type="FunFam" id="3.40.50.1240:FF:000021">
    <property type="entry name" value="Acid phosphatase"/>
    <property type="match status" value="1"/>
</dbReference>
<dbReference type="Gene3D" id="3.40.50.1240">
    <property type="entry name" value="Phosphoglycerate mutase-like"/>
    <property type="match status" value="1"/>
</dbReference>
<dbReference type="InterPro" id="IPR033379">
    <property type="entry name" value="Acid_Pase_AS"/>
</dbReference>
<dbReference type="InterPro" id="IPR000560">
    <property type="entry name" value="His_Pase_clade-2"/>
</dbReference>
<dbReference type="InterPro" id="IPR029033">
    <property type="entry name" value="His_PPase_superfam"/>
</dbReference>
<dbReference type="InterPro" id="IPR016274">
    <property type="entry name" value="Histidine_acid_Pase_euk"/>
</dbReference>
<dbReference type="PANTHER" id="PTHR20963:SF18">
    <property type="entry name" value="ACID PHOSPHATASE PHO11-RELATED"/>
    <property type="match status" value="1"/>
</dbReference>
<dbReference type="PANTHER" id="PTHR20963">
    <property type="entry name" value="MULTIPLE INOSITOL POLYPHOSPHATE PHOSPHATASE-RELATED"/>
    <property type="match status" value="1"/>
</dbReference>
<dbReference type="Pfam" id="PF00328">
    <property type="entry name" value="His_Phos_2"/>
    <property type="match status" value="1"/>
</dbReference>
<dbReference type="PIRSF" id="PIRSF000894">
    <property type="entry name" value="Acid_phosphatase"/>
    <property type="match status" value="1"/>
</dbReference>
<dbReference type="SUPFAM" id="SSF53254">
    <property type="entry name" value="Phosphoglycerate mutase-like"/>
    <property type="match status" value="1"/>
</dbReference>
<dbReference type="PROSITE" id="PS00616">
    <property type="entry name" value="HIS_ACID_PHOSPHAT_1"/>
    <property type="match status" value="1"/>
</dbReference>
<dbReference type="PROSITE" id="PS00778">
    <property type="entry name" value="HIS_ACID_PHOSPHAT_2"/>
    <property type="match status" value="1"/>
</dbReference>
<name>PPAB_YEAST</name>